<gene>
    <name evidence="9" type="primary">TRBV11-2</name>
    <name evidence="8" type="synonym">TCRBV21S3A2N2T</name>
</gene>
<protein>
    <recommendedName>
        <fullName evidence="9">T cell receptor beta variable 11-2</fullName>
    </recommendedName>
</protein>
<dbReference type="EMBL" id="L36092">
    <property type="protein sequence ID" value="AAC80198.1"/>
    <property type="molecule type" value="Genomic_DNA"/>
</dbReference>
<dbReference type="EMBL" id="AC244196">
    <property type="status" value="NOT_ANNOTATED_CDS"/>
    <property type="molecule type" value="Genomic_DNA"/>
</dbReference>
<dbReference type="PDB" id="6R2L">
    <property type="method" value="X-ray"/>
    <property type="resolution" value="2.30 A"/>
    <property type="chains" value="E=21-114"/>
</dbReference>
<dbReference type="PDBsum" id="6R2L"/>
<dbReference type="SMR" id="A0A584"/>
<dbReference type="FunCoup" id="A0A584">
    <property type="interactions" value="749"/>
</dbReference>
<dbReference type="IMGT_GENE-DB" id="TRBV11-2"/>
<dbReference type="AGR" id="HGNC:12181"/>
<dbReference type="GeneCards" id="TRBV11-2"/>
<dbReference type="HGNC" id="HGNC:12181">
    <property type="gene designation" value="TRBV11-2"/>
</dbReference>
<dbReference type="neXtProt" id="NX_A0A584"/>
<dbReference type="InParanoid" id="A0A584"/>
<dbReference type="PAN-GO" id="A0A584">
    <property type="GO annotations" value="2 GO annotations based on evolutionary models"/>
</dbReference>
<dbReference type="ChiTaRS" id="TRBV11-2">
    <property type="organism name" value="human"/>
</dbReference>
<dbReference type="Pharos" id="A0A584">
    <property type="development level" value="Tdark"/>
</dbReference>
<dbReference type="PRO" id="PR:A0A584"/>
<dbReference type="Proteomes" id="UP000005640">
    <property type="component" value="Unplaced"/>
</dbReference>
<dbReference type="GO" id="GO:0005886">
    <property type="term" value="C:plasma membrane"/>
    <property type="evidence" value="ECO:0000318"/>
    <property type="project" value="GO_Central"/>
</dbReference>
<dbReference type="GO" id="GO:0042101">
    <property type="term" value="C:T cell receptor complex"/>
    <property type="evidence" value="ECO:0007669"/>
    <property type="project" value="UniProtKB-KW"/>
</dbReference>
<dbReference type="GO" id="GO:0002250">
    <property type="term" value="P:adaptive immune response"/>
    <property type="evidence" value="ECO:0007669"/>
    <property type="project" value="UniProtKB-KW"/>
</dbReference>
<dbReference type="GO" id="GO:0007166">
    <property type="term" value="P:cell surface receptor signaling pathway"/>
    <property type="evidence" value="ECO:0000318"/>
    <property type="project" value="GO_Central"/>
</dbReference>
<dbReference type="Gene3D" id="2.60.40.10">
    <property type="entry name" value="Immunoglobulins"/>
    <property type="match status" value="1"/>
</dbReference>
<dbReference type="InterPro" id="IPR036179">
    <property type="entry name" value="Ig-like_dom_sf"/>
</dbReference>
<dbReference type="InterPro" id="IPR013783">
    <property type="entry name" value="Ig-like_fold"/>
</dbReference>
<dbReference type="InterPro" id="IPR013106">
    <property type="entry name" value="Ig_V-set"/>
</dbReference>
<dbReference type="InterPro" id="IPR050413">
    <property type="entry name" value="TCR_beta_variable"/>
</dbReference>
<dbReference type="PANTHER" id="PTHR23268:SF118">
    <property type="entry name" value="T CELL RECEPTOR BETA VARIABLE 11-2"/>
    <property type="match status" value="1"/>
</dbReference>
<dbReference type="PANTHER" id="PTHR23268">
    <property type="entry name" value="T-CELL RECEPTOR BETA CHAIN"/>
    <property type="match status" value="1"/>
</dbReference>
<dbReference type="Pfam" id="PF07686">
    <property type="entry name" value="V-set"/>
    <property type="match status" value="1"/>
</dbReference>
<dbReference type="SUPFAM" id="SSF48726">
    <property type="entry name" value="Immunoglobulin"/>
    <property type="match status" value="1"/>
</dbReference>
<evidence type="ECO:0000255" key="1"/>
<evidence type="ECO:0000255" key="2">
    <source>
        <dbReference type="PROSITE-ProRule" id="PRU00114"/>
    </source>
</evidence>
<evidence type="ECO:0000303" key="3">
    <source>
    </source>
</evidence>
<evidence type="ECO:0000303" key="4">
    <source>
    </source>
</evidence>
<evidence type="ECO:0000303" key="5">
    <source>
    </source>
</evidence>
<evidence type="ECO:0000303" key="6">
    <source>
    </source>
</evidence>
<evidence type="ECO:0000303" key="7">
    <source>
    </source>
</evidence>
<evidence type="ECO:0000303" key="8">
    <source>
    </source>
</evidence>
<evidence type="ECO:0000303" key="9">
    <source ref="3"/>
</evidence>
<evidence type="ECO:0000305" key="10"/>
<evidence type="ECO:0007829" key="11">
    <source>
        <dbReference type="PDB" id="6R2L"/>
    </source>
</evidence>
<name>TVBK2_HUMAN</name>
<comment type="function">
    <text evidence="3 5 6 7">V region of the variable domain of T cell receptor (TR) beta chain that participates in the antigen recognition (PubMed:24600447). Alpha-beta T cell receptors are antigen specific receptors which are essential to the immune response and are present on the cell surface of T lymphocytes. Recognize peptide-major histocompatibility (MH) (pMH) complexes that are displayed by antigen presenting cells (APC), a prerequisite for efficient T cell adaptive immunity against pathogens (PubMed:25493333). Binding of alpha-beta TR to pMH complex initiates TR-CD3 clustering on the cell surface and intracellular activation of LCK that phosphorylates the ITAM motifs of CD3G, CD3D, CD3E and CD247 enabling the recruitment of ZAP70. In turn ZAP70 phosphorylates LAT, which recruits numerous signaling molecules to form the LAT signalosome. The LAT signalosome propagates signal branching to three major signaling pathways, the calcium, the mitogen-activated protein kinase (MAPK) kinase and the nuclear factor NF-kappa-B (NF-kB) pathways, leading to the mobilization of transcription factors that are critical for gene expression and essential for T cell growth and differentiation (PubMed:23524462). The T cell repertoire is generated in the thymus, by V-(D)-J rearrangement. This repertoire is then shaped by intrathymic selection events to generate a peripheral T cell pool of self-MH restricted, non-autoaggressive T cells. Post-thymic interaction of alpha-beta TR with the pMH complexes shapes TR structural and functional avidity (PubMed:15040585).</text>
</comment>
<comment type="subunit">
    <text evidence="4">Alpha-beta TR is a heterodimer composed of an alpha and beta chain; disulfide-linked. The alpha-beta TR is associated with the transmembrane signaling CD3 coreceptor proteins to form the TR-CD3 (TcR or TCR). The assembly of alpha-beta TR heterodimers with CD3 occurs in the endoplasmic reticulum where a single alpha-beta TR heterodimer associates with one CD3D-CD3E heterodimer, one CD3G-CD3E heterodimer and one CD247 homodimer forming a stable octameric structure. CD3D-CD3E and CD3G-CD3E heterodimers preferentially associate with TR alpha and TR beta chains, respectively. The association of the CD247 homodimer is the last step of TcR assembly in the endoplasmic reticulum and is required for transport to the cell surface.</text>
</comment>
<comment type="subcellular location">
    <subcellularLocation>
        <location evidence="4">Cell membrane</location>
    </subcellularLocation>
</comment>
<comment type="polymorphism">
    <text evidence="10">There are several alleles. The sequence shown is that of IMGT allele TRBV11-2*01.</text>
</comment>
<feature type="signal peptide" evidence="1">
    <location>
        <begin position="1"/>
        <end position="21"/>
    </location>
</feature>
<feature type="chain" id="PRO_0000444032" description="T cell receptor beta variable 11-2" evidence="1">
    <location>
        <begin position="22"/>
        <end position="115"/>
    </location>
</feature>
<feature type="domain" description="Ig-like" evidence="2">
    <location>
        <begin position="22"/>
        <end position="115" status="greater than"/>
    </location>
</feature>
<feature type="disulfide bond" evidence="2">
    <location>
        <begin position="42"/>
        <end position="111"/>
    </location>
</feature>
<feature type="non-terminal residue">
    <location>
        <position position="115"/>
    </location>
</feature>
<feature type="strand" evidence="11">
    <location>
        <begin position="24"/>
        <end position="26"/>
    </location>
</feature>
<feature type="strand" evidence="11">
    <location>
        <begin position="28"/>
        <end position="33"/>
    </location>
</feature>
<feature type="strand" evidence="11">
    <location>
        <begin position="38"/>
        <end position="43"/>
    </location>
</feature>
<feature type="strand" evidence="11">
    <location>
        <begin position="50"/>
        <end position="56"/>
    </location>
</feature>
<feature type="strand" evidence="11">
    <location>
        <begin position="63"/>
        <end position="69"/>
    </location>
</feature>
<feature type="turn" evidence="11">
    <location>
        <begin position="70"/>
        <end position="72"/>
    </location>
</feature>
<feature type="strand" evidence="11">
    <location>
        <begin position="73"/>
        <end position="75"/>
    </location>
</feature>
<feature type="turn" evidence="11">
    <location>
        <begin position="81"/>
        <end position="83"/>
    </location>
</feature>
<feature type="strand" evidence="11">
    <location>
        <begin position="84"/>
        <end position="89"/>
    </location>
</feature>
<feature type="strand" evidence="11">
    <location>
        <begin position="94"/>
        <end position="100"/>
    </location>
</feature>
<feature type="helix" evidence="11">
    <location>
        <begin position="103"/>
        <end position="105"/>
    </location>
</feature>
<feature type="strand" evidence="11">
    <location>
        <begin position="107"/>
        <end position="114"/>
    </location>
</feature>
<sequence>MGTRLLCWAALCLLGAELTEAGVAQSPRYKIIEKRQSVAFWCNPISGHATLYWYQQILGQGPKLLIQFQNNGVVDDSQLPKDRFSAERLKGVDSTLKIQPAKLEDSAVYLCASSL</sequence>
<proteinExistence type="evidence at protein level"/>
<accession>A0A584</accession>
<organism>
    <name type="scientific">Homo sapiens</name>
    <name type="common">Human</name>
    <dbReference type="NCBI Taxonomy" id="9606"/>
    <lineage>
        <taxon>Eukaryota</taxon>
        <taxon>Metazoa</taxon>
        <taxon>Chordata</taxon>
        <taxon>Craniata</taxon>
        <taxon>Vertebrata</taxon>
        <taxon>Euteleostomi</taxon>
        <taxon>Mammalia</taxon>
        <taxon>Eutheria</taxon>
        <taxon>Euarchontoglires</taxon>
        <taxon>Primates</taxon>
        <taxon>Haplorrhini</taxon>
        <taxon>Catarrhini</taxon>
        <taxon>Hominidae</taxon>
        <taxon>Homo</taxon>
    </lineage>
</organism>
<reference key="1">
    <citation type="journal article" date="1996" name="Science">
        <title>The complete 685-kilobase DNA sequence of the human beta T cell receptor locus.</title>
        <authorList>
            <person name="Rowen L."/>
            <person name="Koop B.F."/>
            <person name="Hood L."/>
        </authorList>
    </citation>
    <scope>NUCLEOTIDE SEQUENCE [GENOMIC DNA] (IMGT ALLELE TRBV11-2*01)</scope>
</reference>
<reference key="2">
    <citation type="journal article" date="2003" name="Nature">
        <title>The DNA sequence of human chromosome 7.</title>
        <authorList>
            <person name="Hillier L.W."/>
            <person name="Fulton R.S."/>
            <person name="Fulton L.A."/>
            <person name="Graves T.A."/>
            <person name="Pepin K.H."/>
            <person name="Wagner-McPherson C."/>
            <person name="Layman D."/>
            <person name="Maas J."/>
            <person name="Jaeger S."/>
            <person name="Walker R."/>
            <person name="Wylie K."/>
            <person name="Sekhon M."/>
            <person name="Becker M.C."/>
            <person name="O'Laughlin M.D."/>
            <person name="Schaller M.E."/>
            <person name="Fewell G.A."/>
            <person name="Delehaunty K.D."/>
            <person name="Miner T.L."/>
            <person name="Nash W.E."/>
            <person name="Cordes M."/>
            <person name="Du H."/>
            <person name="Sun H."/>
            <person name="Edwards J."/>
            <person name="Bradshaw-Cordum H."/>
            <person name="Ali J."/>
            <person name="Andrews S."/>
            <person name="Isak A."/>
            <person name="Vanbrunt A."/>
            <person name="Nguyen C."/>
            <person name="Du F."/>
            <person name="Lamar B."/>
            <person name="Courtney L."/>
            <person name="Kalicki J."/>
            <person name="Ozersky P."/>
            <person name="Bielicki L."/>
            <person name="Scott K."/>
            <person name="Holmes A."/>
            <person name="Harkins R."/>
            <person name="Harris A."/>
            <person name="Strong C.M."/>
            <person name="Hou S."/>
            <person name="Tomlinson C."/>
            <person name="Dauphin-Kohlberg S."/>
            <person name="Kozlowicz-Reilly A."/>
            <person name="Leonard S."/>
            <person name="Rohlfing T."/>
            <person name="Rock S.M."/>
            <person name="Tin-Wollam A.-M."/>
            <person name="Abbott A."/>
            <person name="Minx P."/>
            <person name="Maupin R."/>
            <person name="Strowmatt C."/>
            <person name="Latreille P."/>
            <person name="Miller N."/>
            <person name="Johnson D."/>
            <person name="Murray J."/>
            <person name="Woessner J.P."/>
            <person name="Wendl M.C."/>
            <person name="Yang S.-P."/>
            <person name="Schultz B.R."/>
            <person name="Wallis J.W."/>
            <person name="Spieth J."/>
            <person name="Bieri T.A."/>
            <person name="Nelson J.O."/>
            <person name="Berkowicz N."/>
            <person name="Wohldmann P.E."/>
            <person name="Cook L.L."/>
            <person name="Hickenbotham M.T."/>
            <person name="Eldred J."/>
            <person name="Williams D."/>
            <person name="Bedell J.A."/>
            <person name="Mardis E.R."/>
            <person name="Clifton S.W."/>
            <person name="Chissoe S.L."/>
            <person name="Marra M.A."/>
            <person name="Raymond C."/>
            <person name="Haugen E."/>
            <person name="Gillett W."/>
            <person name="Zhou Y."/>
            <person name="James R."/>
            <person name="Phelps K."/>
            <person name="Iadanoto S."/>
            <person name="Bubb K."/>
            <person name="Simms E."/>
            <person name="Levy R."/>
            <person name="Clendenning J."/>
            <person name="Kaul R."/>
            <person name="Kent W.J."/>
            <person name="Furey T.S."/>
            <person name="Baertsch R.A."/>
            <person name="Brent M.R."/>
            <person name="Keibler E."/>
            <person name="Flicek P."/>
            <person name="Bork P."/>
            <person name="Suyama M."/>
            <person name="Bailey J.A."/>
            <person name="Portnoy M.E."/>
            <person name="Torrents D."/>
            <person name="Chinwalla A.T."/>
            <person name="Gish W.R."/>
            <person name="Eddy S.R."/>
            <person name="McPherson J.D."/>
            <person name="Olson M.V."/>
            <person name="Eichler E.E."/>
            <person name="Green E.D."/>
            <person name="Waterston R.H."/>
            <person name="Wilson R.K."/>
        </authorList>
    </citation>
    <scope>NUCLEOTIDE SEQUENCE [LARGE SCALE GENOMIC DNA] (IMGT ALLELE TRBV11-2*01)</scope>
</reference>
<reference key="3">
    <citation type="book" date="2001" name="The T Cell Receptor FactsBook.">
        <title>The T Cell Receptor FactsBook.</title>
        <editorList>
            <person name="Lefranc M.P."/>
            <person name="Lefranc G."/>
        </editorList>
        <authorList>
            <person name="Lefranc M.P."/>
            <person name="Lefranc G."/>
        </authorList>
    </citation>
    <scope>NOMENCLATURE</scope>
</reference>
<reference key="4">
    <citation type="journal article" date="2004" name="Nat. Rev. Immunol.">
        <title>The many important facets of T-cell repertoire diversity.</title>
        <authorList>
            <person name="Nikolich-Zugich J."/>
            <person name="Slifka M.K."/>
            <person name="Messaoudi I."/>
        </authorList>
    </citation>
    <scope>REVIEW ON T CELL REPERTOIRE DIVERSITY</scope>
</reference>
<reference key="5">
    <citation type="journal article" date="2010" name="Cold Spring Harb. Perspect. Biol.">
        <title>Structural biology of the T-cell receptor: insights into receptor assembly, ligand recognition, and initiation of signaling.</title>
        <authorList>
            <person name="Wucherpfennig K.W."/>
            <person name="Gagnon E."/>
            <person name="Call M.J."/>
            <person name="Huseby E.S."/>
            <person name="Call M.E."/>
        </authorList>
    </citation>
    <scope>REVIEW ON T CELL RECEPTOR-CD3 COMPLEX ASSEMBLY</scope>
    <scope>SUBCELLULAR LOCATION</scope>
</reference>
<reference key="6">
    <citation type="journal article" date="2013" name="Nat. Rev. Immunol.">
        <title>T cell receptor signalling networks: branched, diversified and bounded.</title>
        <authorList>
            <person name="Brownlie R.J."/>
            <person name="Zamoyska R."/>
        </authorList>
    </citation>
    <scope>REVIEW ON T CELL RECEPTOR SIGNALING</scope>
</reference>
<reference key="7">
    <citation type="journal article" date="2014" name="Front. Immunol.">
        <title>Immunoglobulin and T Cell Receptor Genes: IMGT((R)) and the Birth and Rise of Immunoinformatics.</title>
        <authorList>
            <person name="Lefranc M.P."/>
        </authorList>
    </citation>
    <scope>NOMENCLATURE</scope>
</reference>
<reference key="8">
    <citation type="journal article" date="2015" name="Annu. Rev. Immunol.">
        <title>T cell antigen receptor recognition of antigen-presenting molecules.</title>
        <authorList>
            <person name="Rossjohn J."/>
            <person name="Gras S."/>
            <person name="Miles J.J."/>
            <person name="Turner S.J."/>
            <person name="Godfrey D.I."/>
            <person name="McCluskey J."/>
        </authorList>
    </citation>
    <scope>REVIEW ON FUNCTION</scope>
</reference>
<keyword id="KW-0002">3D-structure</keyword>
<keyword id="KW-1064">Adaptive immunity</keyword>
<keyword id="KW-1003">Cell membrane</keyword>
<keyword id="KW-1015">Disulfide bond</keyword>
<keyword id="KW-0391">Immunity</keyword>
<keyword id="KW-0393">Immunoglobulin domain</keyword>
<keyword id="KW-0472">Membrane</keyword>
<keyword id="KW-1267">Proteomics identification</keyword>
<keyword id="KW-0675">Receptor</keyword>
<keyword id="KW-1185">Reference proteome</keyword>
<keyword id="KW-0732">Signal</keyword>
<keyword id="KW-1279">T cell receptor</keyword>